<dbReference type="EMBL" id="CP000282">
    <property type="protein sequence ID" value="ABD80275.1"/>
    <property type="molecule type" value="Genomic_DNA"/>
</dbReference>
<dbReference type="RefSeq" id="WP_011467495.1">
    <property type="nucleotide sequence ID" value="NC_007912.1"/>
</dbReference>
<dbReference type="SMR" id="Q21M04"/>
<dbReference type="STRING" id="203122.Sde_1013"/>
<dbReference type="GeneID" id="98612697"/>
<dbReference type="KEGG" id="sde:Sde_1013"/>
<dbReference type="eggNOG" id="COG0268">
    <property type="taxonomic scope" value="Bacteria"/>
</dbReference>
<dbReference type="HOGENOM" id="CLU_160655_4_0_6"/>
<dbReference type="OrthoDB" id="9807974at2"/>
<dbReference type="Proteomes" id="UP000001947">
    <property type="component" value="Chromosome"/>
</dbReference>
<dbReference type="GO" id="GO:0005829">
    <property type="term" value="C:cytosol"/>
    <property type="evidence" value="ECO:0007669"/>
    <property type="project" value="TreeGrafter"/>
</dbReference>
<dbReference type="GO" id="GO:0015935">
    <property type="term" value="C:small ribosomal subunit"/>
    <property type="evidence" value="ECO:0007669"/>
    <property type="project" value="TreeGrafter"/>
</dbReference>
<dbReference type="GO" id="GO:0070181">
    <property type="term" value="F:small ribosomal subunit rRNA binding"/>
    <property type="evidence" value="ECO:0007669"/>
    <property type="project" value="TreeGrafter"/>
</dbReference>
<dbReference type="GO" id="GO:0003735">
    <property type="term" value="F:structural constituent of ribosome"/>
    <property type="evidence" value="ECO:0007669"/>
    <property type="project" value="InterPro"/>
</dbReference>
<dbReference type="GO" id="GO:0006412">
    <property type="term" value="P:translation"/>
    <property type="evidence" value="ECO:0007669"/>
    <property type="project" value="UniProtKB-UniRule"/>
</dbReference>
<dbReference type="FunFam" id="1.20.58.110:FF:000001">
    <property type="entry name" value="30S ribosomal protein S20"/>
    <property type="match status" value="1"/>
</dbReference>
<dbReference type="Gene3D" id="1.20.58.110">
    <property type="entry name" value="Ribosomal protein S20"/>
    <property type="match status" value="1"/>
</dbReference>
<dbReference type="HAMAP" id="MF_00500">
    <property type="entry name" value="Ribosomal_bS20"/>
    <property type="match status" value="1"/>
</dbReference>
<dbReference type="InterPro" id="IPR002583">
    <property type="entry name" value="Ribosomal_bS20"/>
</dbReference>
<dbReference type="InterPro" id="IPR036510">
    <property type="entry name" value="Ribosomal_bS20_sf"/>
</dbReference>
<dbReference type="NCBIfam" id="TIGR00029">
    <property type="entry name" value="S20"/>
    <property type="match status" value="1"/>
</dbReference>
<dbReference type="PANTHER" id="PTHR33398">
    <property type="entry name" value="30S RIBOSOMAL PROTEIN S20"/>
    <property type="match status" value="1"/>
</dbReference>
<dbReference type="PANTHER" id="PTHR33398:SF1">
    <property type="entry name" value="SMALL RIBOSOMAL SUBUNIT PROTEIN BS20C"/>
    <property type="match status" value="1"/>
</dbReference>
<dbReference type="Pfam" id="PF01649">
    <property type="entry name" value="Ribosomal_S20p"/>
    <property type="match status" value="1"/>
</dbReference>
<dbReference type="SUPFAM" id="SSF46992">
    <property type="entry name" value="Ribosomal protein S20"/>
    <property type="match status" value="1"/>
</dbReference>
<proteinExistence type="inferred from homology"/>
<organism>
    <name type="scientific">Saccharophagus degradans (strain 2-40 / ATCC 43961 / DSM 17024)</name>
    <dbReference type="NCBI Taxonomy" id="203122"/>
    <lineage>
        <taxon>Bacteria</taxon>
        <taxon>Pseudomonadati</taxon>
        <taxon>Pseudomonadota</taxon>
        <taxon>Gammaproteobacteria</taxon>
        <taxon>Cellvibrionales</taxon>
        <taxon>Cellvibrionaceae</taxon>
        <taxon>Saccharophagus</taxon>
    </lineage>
</organism>
<name>RS20_SACD2</name>
<keyword id="KW-1185">Reference proteome</keyword>
<keyword id="KW-0687">Ribonucleoprotein</keyword>
<keyword id="KW-0689">Ribosomal protein</keyword>
<keyword id="KW-0694">RNA-binding</keyword>
<keyword id="KW-0699">rRNA-binding</keyword>
<accession>Q21M04</accession>
<protein>
    <recommendedName>
        <fullName evidence="1">Small ribosomal subunit protein bS20</fullName>
    </recommendedName>
    <alternativeName>
        <fullName evidence="3">30S ribosomal protein S20</fullName>
    </alternativeName>
</protein>
<evidence type="ECO:0000255" key="1">
    <source>
        <dbReference type="HAMAP-Rule" id="MF_00500"/>
    </source>
</evidence>
<evidence type="ECO:0000256" key="2">
    <source>
        <dbReference type="SAM" id="MobiDB-lite"/>
    </source>
</evidence>
<evidence type="ECO:0000305" key="3"/>
<sequence length="88" mass="9516">MANSPQAKKRARQNDKARAHNASLRSMVRTYLKKVVAAIEAGDAETAKAAYAVAIPVLDRVADKGIIHKNKAARHKSRLNAKIKALSA</sequence>
<reference key="1">
    <citation type="journal article" date="2008" name="PLoS Genet.">
        <title>Complete genome sequence of the complex carbohydrate-degrading marine bacterium, Saccharophagus degradans strain 2-40 T.</title>
        <authorList>
            <person name="Weiner R.M."/>
            <person name="Taylor L.E. II"/>
            <person name="Henrissat B."/>
            <person name="Hauser L."/>
            <person name="Land M."/>
            <person name="Coutinho P.M."/>
            <person name="Rancurel C."/>
            <person name="Saunders E.H."/>
            <person name="Longmire A.G."/>
            <person name="Zhang H."/>
            <person name="Bayer E.A."/>
            <person name="Gilbert H.J."/>
            <person name="Larimer F."/>
            <person name="Zhulin I.B."/>
            <person name="Ekborg N.A."/>
            <person name="Lamed R."/>
            <person name="Richardson P.M."/>
            <person name="Borovok I."/>
            <person name="Hutcheson S."/>
        </authorList>
    </citation>
    <scope>NUCLEOTIDE SEQUENCE [LARGE SCALE GENOMIC DNA]</scope>
    <source>
        <strain>2-40 / ATCC 43961 / DSM 17024</strain>
    </source>
</reference>
<gene>
    <name evidence="1" type="primary">rpsT</name>
    <name type="ordered locus">Sde_1013</name>
</gene>
<feature type="chain" id="PRO_0000260142" description="Small ribosomal subunit protein bS20">
    <location>
        <begin position="1"/>
        <end position="88"/>
    </location>
</feature>
<feature type="region of interest" description="Disordered" evidence="2">
    <location>
        <begin position="1"/>
        <end position="23"/>
    </location>
</feature>
<comment type="function">
    <text evidence="1">Binds directly to 16S ribosomal RNA.</text>
</comment>
<comment type="similarity">
    <text evidence="1">Belongs to the bacterial ribosomal protein bS20 family.</text>
</comment>